<accession>Q6MEQ7</accession>
<evidence type="ECO:0000255" key="1">
    <source>
        <dbReference type="HAMAP-Rule" id="MF_00539"/>
    </source>
</evidence>
<evidence type="ECO:0000256" key="2">
    <source>
        <dbReference type="SAM" id="MobiDB-lite"/>
    </source>
</evidence>
<evidence type="ECO:0000305" key="3"/>
<dbReference type="EMBL" id="BX908798">
    <property type="protein sequence ID" value="CAF22942.1"/>
    <property type="molecule type" value="Genomic_DNA"/>
</dbReference>
<dbReference type="RefSeq" id="WP_011174768.1">
    <property type="nucleotide sequence ID" value="NC_005861.2"/>
</dbReference>
<dbReference type="SMR" id="Q6MEQ7"/>
<dbReference type="STRING" id="264201.pc0218"/>
<dbReference type="KEGG" id="pcu:PC_RS01055"/>
<dbReference type="eggNOG" id="COG0211">
    <property type="taxonomic scope" value="Bacteria"/>
</dbReference>
<dbReference type="HOGENOM" id="CLU_095424_4_0_0"/>
<dbReference type="OrthoDB" id="9803474at2"/>
<dbReference type="Proteomes" id="UP000000529">
    <property type="component" value="Chromosome"/>
</dbReference>
<dbReference type="GO" id="GO:0022625">
    <property type="term" value="C:cytosolic large ribosomal subunit"/>
    <property type="evidence" value="ECO:0007669"/>
    <property type="project" value="TreeGrafter"/>
</dbReference>
<dbReference type="GO" id="GO:0003735">
    <property type="term" value="F:structural constituent of ribosome"/>
    <property type="evidence" value="ECO:0007669"/>
    <property type="project" value="InterPro"/>
</dbReference>
<dbReference type="GO" id="GO:0006412">
    <property type="term" value="P:translation"/>
    <property type="evidence" value="ECO:0007669"/>
    <property type="project" value="UniProtKB-UniRule"/>
</dbReference>
<dbReference type="FunFam" id="2.40.50.100:FF:000020">
    <property type="entry name" value="50S ribosomal protein L27"/>
    <property type="match status" value="1"/>
</dbReference>
<dbReference type="Gene3D" id="2.40.50.100">
    <property type="match status" value="1"/>
</dbReference>
<dbReference type="HAMAP" id="MF_00539">
    <property type="entry name" value="Ribosomal_bL27"/>
    <property type="match status" value="1"/>
</dbReference>
<dbReference type="InterPro" id="IPR001684">
    <property type="entry name" value="Ribosomal_bL27"/>
</dbReference>
<dbReference type="NCBIfam" id="TIGR00062">
    <property type="entry name" value="L27"/>
    <property type="match status" value="1"/>
</dbReference>
<dbReference type="PANTHER" id="PTHR15893:SF0">
    <property type="entry name" value="LARGE RIBOSOMAL SUBUNIT PROTEIN BL27M"/>
    <property type="match status" value="1"/>
</dbReference>
<dbReference type="PANTHER" id="PTHR15893">
    <property type="entry name" value="RIBOSOMAL PROTEIN L27"/>
    <property type="match status" value="1"/>
</dbReference>
<dbReference type="Pfam" id="PF01016">
    <property type="entry name" value="Ribosomal_L27"/>
    <property type="match status" value="1"/>
</dbReference>
<dbReference type="PRINTS" id="PR00063">
    <property type="entry name" value="RIBOSOMALL27"/>
</dbReference>
<dbReference type="SUPFAM" id="SSF110324">
    <property type="entry name" value="Ribosomal L27 protein-like"/>
    <property type="match status" value="1"/>
</dbReference>
<gene>
    <name evidence="1" type="primary">rpmA</name>
    <name type="ordered locus">pc0218</name>
</gene>
<organism>
    <name type="scientific">Protochlamydia amoebophila (strain UWE25)</name>
    <dbReference type="NCBI Taxonomy" id="264201"/>
    <lineage>
        <taxon>Bacteria</taxon>
        <taxon>Pseudomonadati</taxon>
        <taxon>Chlamydiota</taxon>
        <taxon>Chlamydiia</taxon>
        <taxon>Parachlamydiales</taxon>
        <taxon>Parachlamydiaceae</taxon>
        <taxon>Candidatus Protochlamydia</taxon>
    </lineage>
</organism>
<reference key="1">
    <citation type="journal article" date="2004" name="Science">
        <title>Illuminating the evolutionary history of chlamydiae.</title>
        <authorList>
            <person name="Horn M."/>
            <person name="Collingro A."/>
            <person name="Schmitz-Esser S."/>
            <person name="Beier C.L."/>
            <person name="Purkhold U."/>
            <person name="Fartmann B."/>
            <person name="Brandt P."/>
            <person name="Nyakatura G.J."/>
            <person name="Droege M."/>
            <person name="Frishman D."/>
            <person name="Rattei T."/>
            <person name="Mewes H.-W."/>
            <person name="Wagner M."/>
        </authorList>
    </citation>
    <scope>NUCLEOTIDE SEQUENCE [LARGE SCALE GENOMIC DNA]</scope>
    <source>
        <strain>UWE25</strain>
    </source>
</reference>
<keyword id="KW-1185">Reference proteome</keyword>
<keyword id="KW-0687">Ribonucleoprotein</keyword>
<keyword id="KW-0689">Ribosomal protein</keyword>
<sequence length="83" mass="8891">MAHKKGQGSTRNGRDSHSKRLGIKVGSGEVVRAGSILVRQRGTKWHPAKNVGRGTDDTLFALADGVVAFRKSNKTYISIETGA</sequence>
<proteinExistence type="inferred from homology"/>
<name>RL27_PARUW</name>
<protein>
    <recommendedName>
        <fullName evidence="1">Large ribosomal subunit protein bL27</fullName>
    </recommendedName>
    <alternativeName>
        <fullName evidence="3">50S ribosomal protein L27</fullName>
    </alternativeName>
</protein>
<feature type="chain" id="PRO_0000181138" description="Large ribosomal subunit protein bL27">
    <location>
        <begin position="1"/>
        <end position="83"/>
    </location>
</feature>
<feature type="region of interest" description="Disordered" evidence="2">
    <location>
        <begin position="1"/>
        <end position="22"/>
    </location>
</feature>
<comment type="similarity">
    <text evidence="1">Belongs to the bacterial ribosomal protein bL27 family.</text>
</comment>